<organism>
    <name type="scientific">Rattus norvegicus</name>
    <name type="common">Rat</name>
    <dbReference type="NCBI Taxonomy" id="10116"/>
    <lineage>
        <taxon>Eukaryota</taxon>
        <taxon>Metazoa</taxon>
        <taxon>Chordata</taxon>
        <taxon>Craniata</taxon>
        <taxon>Vertebrata</taxon>
        <taxon>Euteleostomi</taxon>
        <taxon>Mammalia</taxon>
        <taxon>Eutheria</taxon>
        <taxon>Euarchontoglires</taxon>
        <taxon>Glires</taxon>
        <taxon>Rodentia</taxon>
        <taxon>Myomorpha</taxon>
        <taxon>Muroidea</taxon>
        <taxon>Muridae</taxon>
        <taxon>Murinae</taxon>
        <taxon>Rattus</taxon>
    </lineage>
</organism>
<dbReference type="EMBL" id="BC079346">
    <property type="protein sequence ID" value="AAH79346.1"/>
    <property type="molecule type" value="mRNA"/>
</dbReference>
<dbReference type="EMBL" id="BC093390">
    <property type="protein sequence ID" value="AAH93390.1"/>
    <property type="molecule type" value="mRNA"/>
</dbReference>
<dbReference type="RefSeq" id="NP_001007738.1">
    <property type="nucleotide sequence ID" value="NM_001007737.1"/>
</dbReference>
<dbReference type="RefSeq" id="XP_038940245.1">
    <property type="nucleotide sequence ID" value="XM_039084317.2"/>
</dbReference>
<dbReference type="SMR" id="Q68FU5"/>
<dbReference type="FunCoup" id="Q68FU5">
    <property type="interactions" value="1894"/>
</dbReference>
<dbReference type="iPTMnet" id="Q68FU5"/>
<dbReference type="PhosphoSitePlus" id="Q68FU5"/>
<dbReference type="PaxDb" id="10116-ENSRNOP00000030439"/>
<dbReference type="Ensembl" id="ENSRNOT00000112470.1">
    <property type="protein sequence ID" value="ENSRNOP00000094802.1"/>
    <property type="gene ID" value="ENSRNOG00000027161.5"/>
</dbReference>
<dbReference type="GeneID" id="361740"/>
<dbReference type="KEGG" id="rno:361740"/>
<dbReference type="UCSC" id="RGD:1359158">
    <property type="organism name" value="rat"/>
</dbReference>
<dbReference type="AGR" id="RGD:1359158"/>
<dbReference type="CTD" id="361740"/>
<dbReference type="RGD" id="1359158">
    <property type="gene designation" value="C1h9orf85"/>
</dbReference>
<dbReference type="eggNOG" id="KOG3241">
    <property type="taxonomic scope" value="Eukaryota"/>
</dbReference>
<dbReference type="GeneTree" id="ENSGT00440000033805"/>
<dbReference type="HOGENOM" id="CLU_087756_1_0_1"/>
<dbReference type="InParanoid" id="Q68FU5"/>
<dbReference type="OMA" id="CACELEL"/>
<dbReference type="PhylomeDB" id="Q68FU5"/>
<dbReference type="TreeFam" id="TF324614"/>
<dbReference type="PRO" id="PR:Q68FU5"/>
<dbReference type="Proteomes" id="UP000002494">
    <property type="component" value="Chromosome 1"/>
</dbReference>
<dbReference type="Bgee" id="ENSRNOG00000027161">
    <property type="expression patterns" value="Expressed in ovary and 19 other cell types or tissues"/>
</dbReference>
<dbReference type="InterPro" id="IPR019351">
    <property type="entry name" value="DUF2039"/>
</dbReference>
<dbReference type="PANTHER" id="PTHR22876:SF5">
    <property type="entry name" value="CHROMOSOME 9 OPEN READING FRAME 85"/>
    <property type="match status" value="1"/>
</dbReference>
<dbReference type="PANTHER" id="PTHR22876">
    <property type="entry name" value="ZGC:101016"/>
    <property type="match status" value="1"/>
</dbReference>
<dbReference type="Pfam" id="PF10217">
    <property type="entry name" value="DUF2039"/>
    <property type="match status" value="1"/>
</dbReference>
<evidence type="ECO:0000250" key="1">
    <source>
        <dbReference type="UniProtKB" id="Q96MD7"/>
    </source>
</evidence>
<evidence type="ECO:0000256" key="2">
    <source>
        <dbReference type="SAM" id="MobiDB-lite"/>
    </source>
</evidence>
<evidence type="ECO:0007744" key="3">
    <source>
    </source>
</evidence>
<sequence>MSSQKGNVTRSRPQKHQNTFTFKNDKFDKSVQTKKINAKLHDGVCQRCKEVLEWRVKYSKYKPLSKPKKCVKCLQKTVKDSYHIMCRPCACKLEVCAKCGKEEEIVIPFNKEPEPSENTESEGSNHRRSCKRKEDSDEDLDAESDSEGEDEDTQA</sequence>
<accession>Q68FU5</accession>
<name>CI085_RAT</name>
<protein>
    <recommendedName>
        <fullName>Uncharacterized protein C9orf85 homolog</fullName>
    </recommendedName>
</protein>
<keyword id="KW-0007">Acetylation</keyword>
<keyword id="KW-0597">Phosphoprotein</keyword>
<keyword id="KW-1185">Reference proteome</keyword>
<feature type="initiator methionine" description="Removed" evidence="1">
    <location>
        <position position="1"/>
    </location>
</feature>
<feature type="chain" id="PRO_0000089722" description="Uncharacterized protein C9orf85 homolog">
    <location>
        <begin position="2"/>
        <end position="155"/>
    </location>
</feature>
<feature type="region of interest" description="Disordered" evidence="2">
    <location>
        <begin position="1"/>
        <end position="22"/>
    </location>
</feature>
<feature type="region of interest" description="Disordered" evidence="2">
    <location>
        <begin position="108"/>
        <end position="155"/>
    </location>
</feature>
<feature type="compositionally biased region" description="Acidic residues" evidence="2">
    <location>
        <begin position="136"/>
        <end position="155"/>
    </location>
</feature>
<feature type="modified residue" description="N-acetylserine" evidence="1">
    <location>
        <position position="2"/>
    </location>
</feature>
<feature type="modified residue" description="Phosphoserine" evidence="3">
    <location>
        <position position="136"/>
    </location>
</feature>
<feature type="modified residue" description="Phosphoserine" evidence="3">
    <location>
        <position position="144"/>
    </location>
</feature>
<feature type="modified residue" description="Phosphoserine" evidence="3">
    <location>
        <position position="146"/>
    </location>
</feature>
<reference key="1">
    <citation type="journal article" date="2004" name="Genome Res.">
        <title>The status, quality, and expansion of the NIH full-length cDNA project: the Mammalian Gene Collection (MGC).</title>
        <authorList>
            <consortium name="The MGC Project Team"/>
        </authorList>
    </citation>
    <scope>NUCLEOTIDE SEQUENCE [LARGE SCALE MRNA]</scope>
    <source>
        <tissue>Kidney</tissue>
        <tissue>Thymus</tissue>
    </source>
</reference>
<reference key="2">
    <citation type="journal article" date="2012" name="Nat. Commun.">
        <title>Quantitative maps of protein phosphorylation sites across 14 different rat organs and tissues.</title>
        <authorList>
            <person name="Lundby A."/>
            <person name="Secher A."/>
            <person name="Lage K."/>
            <person name="Nordsborg N.B."/>
            <person name="Dmytriyev A."/>
            <person name="Lundby C."/>
            <person name="Olsen J.V."/>
        </authorList>
    </citation>
    <scope>PHOSPHORYLATION [LARGE SCALE ANALYSIS] AT SER-136; SER-144 AND SER-146</scope>
    <scope>IDENTIFICATION BY MASS SPECTROMETRY [LARGE SCALE ANALYSIS]</scope>
</reference>
<proteinExistence type="evidence at protein level"/>